<comment type="function">
    <text evidence="1 2 3 4 5">Ornithine decarboxylase (ODC) antizyme protein that negatively regulates ODC activity and intracellular polyamine biosynthesis and uptake in response to increased intracellular polyamine levels. Binds to ODC monomers, inhibiting the assembly of the functional ODC homodimer, and targets the monomers for ubiquitin-independent proteolytic destruction by the 26S proteasome (PubMed:16916800, PubMed:18508777). Triggers ODC degradation by inducing the exposure of a cryptic proteasome-interacting surface of ODC (By similarity). Stabilizes AZIN2 by interfering with its ubiquitination (PubMed:18062773). Also inhibits cellular uptake of polyamines by inactivating the polyamine uptake transporter. SMAD1/OAZ1/PSMB4 complex mediates the degradation of the CREBBP/EP300 repressor SNIP1. Involved in the translocation of AZIN2 from ER-Golgi intermediate compartment (ERGIC) to the cytosol (PubMed:19449338).</text>
</comment>
<comment type="subunit">
    <text evidence="1 2 3 6">Interacts with ODC1 and thereby sterically blocks ODC homodimerization (By similarity). Forms a ternary complex with PSMB4 and OAZ1 before PSMB4 is incorporated into the 20S proteasome (By similarity). Interacts with AZIN2; this interaction disrupts the interaction between the antizyme and ODC1 (PubMed:16916800, PubMed:18062773, PubMed:24967154). Interacts with FAM171A1 (By similarity).</text>
</comment>
<comment type="alternative products">
    <event type="ribosomal frameshifting"/>
    <isoform>
        <id>P54369-1</id>
        <name>1</name>
        <sequence type="displayed"/>
    </isoform>
    <text>A ribosomal frameshift occurs between the codons for Ser-68 and Asp-69. An autoregulatory mechanism enables modulation of frameshifting according to the cellular concentration of polyamines.</text>
</comment>
<comment type="similarity">
    <text evidence="7">Belongs to the ODC antizyme family.</text>
</comment>
<feature type="chain" id="PRO_0000220851" description="Ornithine decarboxylase antizyme 1">
    <location>
        <begin position="1"/>
        <end position="227"/>
    </location>
</feature>
<feature type="sequence conflict" description="In Ref. 1; AAB96330." evidence="7" ref="1">
    <original>D</original>
    <variation>C</variation>
    <location>
        <position position="69"/>
    </location>
</feature>
<sequence length="227" mass="25133">MVKSSLQRILNSHCFAREKEGDKRSATLHASRTMPLLSQHSRGGCSSESSRVALNCCSNLGPGPRWCSDVPHPPLKIPGGRGNSQRDHSLSASILYSDERLNVTEEPTSNDKTRVLSIQSTLTEAKQVTWRAVWSGGGLYIELPAGPLPEGSKDSFAALLEFAEEQLQADHVFICFPKNREDRAALLRTFSFLGFEIVRPGHPLVPKRPDACFMVYTLEREDPGEED</sequence>
<organism>
    <name type="scientific">Mus musculus</name>
    <name type="common">Mouse</name>
    <dbReference type="NCBI Taxonomy" id="10090"/>
    <lineage>
        <taxon>Eukaryota</taxon>
        <taxon>Metazoa</taxon>
        <taxon>Chordata</taxon>
        <taxon>Craniata</taxon>
        <taxon>Vertebrata</taxon>
        <taxon>Euteleostomi</taxon>
        <taxon>Mammalia</taxon>
        <taxon>Eutheria</taxon>
        <taxon>Euarchontoglires</taxon>
        <taxon>Glires</taxon>
        <taxon>Rodentia</taxon>
        <taxon>Myomorpha</taxon>
        <taxon>Muroidea</taxon>
        <taxon>Muridae</taxon>
        <taxon>Murinae</taxon>
        <taxon>Mus</taxon>
        <taxon>Mus</taxon>
    </lineage>
</organism>
<dbReference type="EMBL" id="U52822">
    <property type="protein sequence ID" value="AAB96329.1"/>
    <property type="molecule type" value="mRNA"/>
</dbReference>
<dbReference type="EMBL" id="U52823">
    <property type="protein sequence ID" value="AAB96330.1"/>
    <property type="molecule type" value="Genomic_DNA"/>
</dbReference>
<dbReference type="EMBL" id="U84291">
    <property type="protein sequence ID" value="AAC53307.1"/>
    <property type="molecule type" value="Genomic_DNA"/>
</dbReference>
<dbReference type="CCDS" id="CCDS56736.1">
    <molecule id="P54369-1"/>
</dbReference>
<dbReference type="PIR" id="PC4378">
    <property type="entry name" value="PC4378"/>
</dbReference>
<dbReference type="RefSeq" id="NP_032779.2">
    <molecule id="P54369-1"/>
    <property type="nucleotide sequence ID" value="NM_008753.4"/>
</dbReference>
<dbReference type="SMR" id="P54369"/>
<dbReference type="FunCoup" id="P54369">
    <property type="interactions" value="3459"/>
</dbReference>
<dbReference type="IntAct" id="P54369">
    <property type="interactions" value="1"/>
</dbReference>
<dbReference type="STRING" id="10090.ENSMUSP00000137400"/>
<dbReference type="iPTMnet" id="P54369"/>
<dbReference type="PhosphoSitePlus" id="P54369"/>
<dbReference type="PaxDb" id="10090-ENSMUSP00000137400"/>
<dbReference type="ProteomicsDB" id="289958">
    <molecule id="P54369-1"/>
</dbReference>
<dbReference type="Antibodypedia" id="1951">
    <property type="antibodies" value="113 antibodies from 25 providers"/>
</dbReference>
<dbReference type="DNASU" id="18245"/>
<dbReference type="Ensembl" id="ENSMUST00000180036.8">
    <molecule id="P54369-1"/>
    <property type="protein sequence ID" value="ENSMUSP00000137400.2"/>
    <property type="gene ID" value="ENSMUSG00000035242.17"/>
</dbReference>
<dbReference type="GeneID" id="18245"/>
<dbReference type="KEGG" id="mmu:18245"/>
<dbReference type="UCSC" id="uc033frg.1">
    <molecule id="P54369-1"/>
    <property type="organism name" value="mouse"/>
</dbReference>
<dbReference type="AGR" id="MGI:109433"/>
<dbReference type="CTD" id="4946"/>
<dbReference type="MGI" id="MGI:109433">
    <property type="gene designation" value="Oaz1"/>
</dbReference>
<dbReference type="VEuPathDB" id="HostDB:ENSMUSG00000035242"/>
<dbReference type="eggNOG" id="KOG4387">
    <property type="taxonomic scope" value="Eukaryota"/>
</dbReference>
<dbReference type="GeneTree" id="ENSGT00940000159808"/>
<dbReference type="InParanoid" id="P54369"/>
<dbReference type="OMA" id="HVDHVFI"/>
<dbReference type="OrthoDB" id="5959761at2759"/>
<dbReference type="PhylomeDB" id="P54369"/>
<dbReference type="TreeFam" id="TF314741"/>
<dbReference type="Reactome" id="R-MMU-350562">
    <property type="pathway name" value="Regulation of ornithine decarboxylase (ODC)"/>
</dbReference>
<dbReference type="BioGRID-ORCS" id="18245">
    <property type="hits" value="10 hits in 60 CRISPR screens"/>
</dbReference>
<dbReference type="ChiTaRS" id="Oaz1">
    <property type="organism name" value="mouse"/>
</dbReference>
<dbReference type="PRO" id="PR:P54369"/>
<dbReference type="Proteomes" id="UP000000589">
    <property type="component" value="Chromosome 10"/>
</dbReference>
<dbReference type="RNAct" id="P54369">
    <property type="molecule type" value="protein"/>
</dbReference>
<dbReference type="Bgee" id="ENSMUSG00000035242">
    <property type="expression patterns" value="Expressed in bone marrow and 66 other cell types or tissues"/>
</dbReference>
<dbReference type="ExpressionAtlas" id="P54369">
    <property type="expression patterns" value="baseline and differential"/>
</dbReference>
<dbReference type="GO" id="GO:0008073">
    <property type="term" value="F:ornithine decarboxylase inhibitor activity"/>
    <property type="evidence" value="ECO:0000314"/>
    <property type="project" value="UniProtKB"/>
</dbReference>
<dbReference type="GO" id="GO:1902268">
    <property type="term" value="P:negative regulation of polyamine transmembrane transport"/>
    <property type="evidence" value="ECO:0000314"/>
    <property type="project" value="UniProtKB"/>
</dbReference>
<dbReference type="GO" id="GO:0006596">
    <property type="term" value="P:polyamine biosynthetic process"/>
    <property type="evidence" value="ECO:0007669"/>
    <property type="project" value="UniProtKB-KW"/>
</dbReference>
<dbReference type="GO" id="GO:0006595">
    <property type="term" value="P:polyamine metabolic process"/>
    <property type="evidence" value="ECO:0000304"/>
    <property type="project" value="MGI"/>
</dbReference>
<dbReference type="GO" id="GO:0090316">
    <property type="term" value="P:positive regulation of intracellular protein transport"/>
    <property type="evidence" value="ECO:0000314"/>
    <property type="project" value="UniProtKB"/>
</dbReference>
<dbReference type="GO" id="GO:0045732">
    <property type="term" value="P:positive regulation of protein catabolic process"/>
    <property type="evidence" value="ECO:0000314"/>
    <property type="project" value="UniProtKB"/>
</dbReference>
<dbReference type="GO" id="GO:0075523">
    <property type="term" value="P:viral translational frameshifting"/>
    <property type="evidence" value="ECO:0007669"/>
    <property type="project" value="UniProtKB-KW"/>
</dbReference>
<dbReference type="FunFam" id="3.40.630.60:FF:000001">
    <property type="entry name" value="Ornithine decarboxylase antizyme 1"/>
    <property type="match status" value="1"/>
</dbReference>
<dbReference type="Gene3D" id="3.40.630.60">
    <property type="match status" value="1"/>
</dbReference>
<dbReference type="InterPro" id="IPR016181">
    <property type="entry name" value="Acyl_CoA_acyltransferase"/>
</dbReference>
<dbReference type="InterPro" id="IPR002993">
    <property type="entry name" value="ODC_AZ"/>
</dbReference>
<dbReference type="InterPro" id="IPR038581">
    <property type="entry name" value="ODC_AZ_sf"/>
</dbReference>
<dbReference type="PANTHER" id="PTHR10279">
    <property type="entry name" value="ORNITHINE DECARBOXYLASE ANTIZYME"/>
    <property type="match status" value="1"/>
</dbReference>
<dbReference type="PANTHER" id="PTHR10279:SF8">
    <property type="entry name" value="ORNITHINE DECARBOXYLASE ANTIZYME 1"/>
    <property type="match status" value="1"/>
</dbReference>
<dbReference type="Pfam" id="PF02100">
    <property type="entry name" value="ODC_AZ"/>
    <property type="match status" value="1"/>
</dbReference>
<dbReference type="SUPFAM" id="SSF55729">
    <property type="entry name" value="Acyl-CoA N-acyltransferases (Nat)"/>
    <property type="match status" value="1"/>
</dbReference>
<dbReference type="PROSITE" id="PS01337">
    <property type="entry name" value="ODC_AZ"/>
    <property type="match status" value="1"/>
</dbReference>
<reference key="1">
    <citation type="journal article" date="1997" name="Eur. J. Biochem.">
        <title>Polyamines regulate both transcription and translation of the gene encoding ornithine decarboxylase antizyme in mouse.</title>
        <authorList>
            <person name="Nilsson J."/>
            <person name="Koskiniemi S."/>
            <person name="Persson K."/>
            <person name="Grahn B."/>
            <person name="Holm I."/>
        </authorList>
    </citation>
    <scope>NUCLEOTIDE SEQUENCE [GENOMIC DNA / MRNA]</scope>
</reference>
<reference key="2">
    <citation type="submission" date="1997-01" db="EMBL/GenBank/DDBJ databases">
        <authorList>
            <person name="Kankare K."/>
            <person name="Uusi-Oukari M."/>
            <person name="Janne O.A."/>
        </authorList>
    </citation>
    <scope>NUCLEOTIDE SEQUENCE [GENOMIC DNA]</scope>
    <source>
        <strain>129/SvJ</strain>
    </source>
</reference>
<reference key="3">
    <citation type="journal article" date="2006" name="J. Biol. Chem.">
        <title>Mouse ornithine decarboxylase-like gene encodes an antizyme inhibitor devoid of ornithine and arginine decarboxylating activity.</title>
        <authorList>
            <person name="Lopez-Contreras A.J."/>
            <person name="Lopez-Garcia C."/>
            <person name="Jimenez-Cervantes C."/>
            <person name="Cremades A."/>
            <person name="Penafiel R."/>
        </authorList>
    </citation>
    <scope>FUNCTION</scope>
    <scope>INTERACTION WITH AZIN2</scope>
</reference>
<reference key="4">
    <citation type="journal article" date="2008" name="Biochem. J.">
        <title>ODCp, a brain- and testis-specific ornithine decarboxylase paralogue, functions as an antizyme inhibitor, although less efficiently than AzI1.</title>
        <authorList>
            <person name="Snapir Z."/>
            <person name="Keren-Paz A."/>
            <person name="Bercovich Z."/>
            <person name="Kahana C."/>
        </authorList>
    </citation>
    <scope>FUNCTION</scope>
    <scope>INTERACTION WITH AZIN2</scope>
</reference>
<reference key="5">
    <citation type="journal article" date="2008" name="J. Biol. Chem.">
        <title>Antizyme inhibitor 2 (AZIN2/ODCp) stimulates polyamine uptake in mammalian cells.</title>
        <authorList>
            <person name="Lopez-Contreras A.J."/>
            <person name="Ramos-Molina B."/>
            <person name="Cremades A."/>
            <person name="Penafiel R."/>
        </authorList>
    </citation>
    <scope>FUNCTION</scope>
</reference>
<reference key="6">
    <citation type="journal article" date="2009" name="J. Cell. Biochem.">
        <title>Subcellular localization of antizyme inhibitor 2 in mammalian cells: Influence of intrinsic sequences and interaction with antizymes.</title>
        <authorList>
            <person name="Lopez-Contreras A.J."/>
            <person name="Sanchez-Laorden B.L."/>
            <person name="Ramos-Molina B."/>
            <person name="de la Morena M.E."/>
            <person name="Cremades A."/>
            <person name="Penafiel R."/>
        </authorList>
    </citation>
    <scope>FUNCTION</scope>
</reference>
<reference key="7">
    <citation type="journal article" date="2014" name="FEBS Open Bio">
        <title>Structural and degradative aspects of ornithine decarboxylase antizyme inhibitor 2.</title>
        <authorList>
            <person name="Ramos-Molina B."/>
            <person name="Lambertos A."/>
            <person name="Lopez-Contreras A.J."/>
            <person name="Kasprzak J.M."/>
            <person name="Czerwoniec A."/>
            <person name="Bujnicki J.M."/>
            <person name="Cremades A."/>
            <person name="Penafiel R."/>
        </authorList>
    </citation>
    <scope>INTERACTION WITH AZIN2</scope>
</reference>
<gene>
    <name type="primary">Oaz1</name>
    <name type="synonym">Oaz</name>
</gene>
<proteinExistence type="evidence at protein level"/>
<name>OAZ1_MOUSE</name>
<accession>P54369</accession>
<accession>O08610</accession>
<keyword id="KW-0620">Polyamine biosynthesis</keyword>
<keyword id="KW-1185">Reference proteome</keyword>
<keyword id="KW-0688">Ribosomal frameshifting</keyword>
<keyword id="KW-0813">Transport</keyword>
<protein>
    <recommendedName>
        <fullName>Ornithine decarboxylase antizyme 1</fullName>
        <shortName>ODC-Az</shortName>
    </recommendedName>
</protein>
<evidence type="ECO:0000250" key="1">
    <source>
        <dbReference type="UniProtKB" id="P54368"/>
    </source>
</evidence>
<evidence type="ECO:0000269" key="2">
    <source>
    </source>
</evidence>
<evidence type="ECO:0000269" key="3">
    <source>
    </source>
</evidence>
<evidence type="ECO:0000269" key="4">
    <source>
    </source>
</evidence>
<evidence type="ECO:0000269" key="5">
    <source>
    </source>
</evidence>
<evidence type="ECO:0000269" key="6">
    <source>
    </source>
</evidence>
<evidence type="ECO:0000305" key="7"/>